<reference key="1">
    <citation type="journal article" date="2008" name="DNA Res.">
        <title>Complete genome sequence and comparative analysis of the wild-type commensal Escherichia coli strain SE11 isolated from a healthy adult.</title>
        <authorList>
            <person name="Oshima K."/>
            <person name="Toh H."/>
            <person name="Ogura Y."/>
            <person name="Sasamoto H."/>
            <person name="Morita H."/>
            <person name="Park S.-H."/>
            <person name="Ooka T."/>
            <person name="Iyoda S."/>
            <person name="Taylor T.D."/>
            <person name="Hayashi T."/>
            <person name="Itoh K."/>
            <person name="Hattori M."/>
        </authorList>
    </citation>
    <scope>NUCLEOTIDE SEQUENCE [LARGE SCALE GENOMIC DNA]</scope>
    <source>
        <strain>SE11</strain>
    </source>
</reference>
<feature type="chain" id="PRO_1000187076" description="2-succinyl-5-enolpyruvyl-6-hydroxy-3-cyclohexene-1-carboxylate synthase">
    <location>
        <begin position="1"/>
        <end position="556"/>
    </location>
</feature>
<protein>
    <recommendedName>
        <fullName evidence="1">2-succinyl-5-enolpyruvyl-6-hydroxy-3-cyclohexene-1-carboxylate synthase</fullName>
        <shortName evidence="1">SEPHCHC synthase</shortName>
        <ecNumber evidence="1">2.2.1.9</ecNumber>
    </recommendedName>
    <alternativeName>
        <fullName evidence="1">Menaquinone biosynthesis protein MenD</fullName>
    </alternativeName>
</protein>
<keyword id="KW-0460">Magnesium</keyword>
<keyword id="KW-0464">Manganese</keyword>
<keyword id="KW-0474">Menaquinone biosynthesis</keyword>
<keyword id="KW-0479">Metal-binding</keyword>
<keyword id="KW-0786">Thiamine pyrophosphate</keyword>
<keyword id="KW-0808">Transferase</keyword>
<sequence>MSVSAFNRRWAAVILEALTRHGVRHICIAPGSRSTPLTLAAAENSTFIHHTHFDERGLGHLALGLAKVSKQPVAVIVTSGTAVANLYPALIEAGLTGEKLILLTADRPPELIDCGANQAIRQPGMFASHPTHSISLPRPTRDIPARWLVSTIDHALGTLHAGGVHINCPFAEPLYGEMDDTGLSWQQRLGDWWQDDKPWLREAPRLESEKQRDWFFWRQKRGVVVAGRMSAEEGKKVALWAQTLGWPLIGDVLSQTGQPLPCADLWLGNAKATSELQQAQIVVQLGSSLTGKRLLQWQASCEPEEYWIVDDIEGRLDPAHHRGRRLIANIADWLELHPAEKRQPWCVEIPRLAEQAMQAVIARRDAFGEAQLAHRICDYLPEQGQLFVGNSLVVRLIDALSQLPAGYPVYSNRGASGIDGLLSTAAGVQRASGKPTLAIVGDLSALYDLNALALLRQVSAPLVLIVVNNNGGQIFSLLPTPQSERERFYLMPQNVHFEHAAAMFELKYHRPQNWQELETAFADAWRTPTTTVIEMVVNDTDGAQTLQQLLAQVSHL</sequence>
<evidence type="ECO:0000255" key="1">
    <source>
        <dbReference type="HAMAP-Rule" id="MF_01659"/>
    </source>
</evidence>
<dbReference type="EC" id="2.2.1.9" evidence="1"/>
<dbReference type="EMBL" id="AP009240">
    <property type="protein sequence ID" value="BAG78048.1"/>
    <property type="molecule type" value="Genomic_DNA"/>
</dbReference>
<dbReference type="RefSeq" id="WP_001297082.1">
    <property type="nucleotide sequence ID" value="NC_011415.1"/>
</dbReference>
<dbReference type="SMR" id="B6I7K8"/>
<dbReference type="KEGG" id="ecy:ECSE_2524"/>
<dbReference type="HOGENOM" id="CLU_006051_3_0_6"/>
<dbReference type="UniPathway" id="UPA00079"/>
<dbReference type="UniPathway" id="UPA01057">
    <property type="reaction ID" value="UER00164"/>
</dbReference>
<dbReference type="Proteomes" id="UP000008199">
    <property type="component" value="Chromosome"/>
</dbReference>
<dbReference type="GO" id="GO:0070204">
    <property type="term" value="F:2-succinyl-5-enolpyruvyl-6-hydroxy-3-cyclohexene-1-carboxylic-acid synthase activity"/>
    <property type="evidence" value="ECO:0007669"/>
    <property type="project" value="UniProtKB-UniRule"/>
</dbReference>
<dbReference type="GO" id="GO:0000287">
    <property type="term" value="F:magnesium ion binding"/>
    <property type="evidence" value="ECO:0007669"/>
    <property type="project" value="UniProtKB-UniRule"/>
</dbReference>
<dbReference type="GO" id="GO:0030145">
    <property type="term" value="F:manganese ion binding"/>
    <property type="evidence" value="ECO:0007669"/>
    <property type="project" value="UniProtKB-UniRule"/>
</dbReference>
<dbReference type="GO" id="GO:0030976">
    <property type="term" value="F:thiamine pyrophosphate binding"/>
    <property type="evidence" value="ECO:0007669"/>
    <property type="project" value="UniProtKB-UniRule"/>
</dbReference>
<dbReference type="GO" id="GO:0009234">
    <property type="term" value="P:menaquinone biosynthetic process"/>
    <property type="evidence" value="ECO:0007669"/>
    <property type="project" value="UniProtKB-UniRule"/>
</dbReference>
<dbReference type="CDD" id="cd07037">
    <property type="entry name" value="TPP_PYR_MenD"/>
    <property type="match status" value="1"/>
</dbReference>
<dbReference type="CDD" id="cd02009">
    <property type="entry name" value="TPP_SHCHC_synthase"/>
    <property type="match status" value="1"/>
</dbReference>
<dbReference type="FunFam" id="3.40.50.1220:FF:000010">
    <property type="entry name" value="2-succinyl-5-enolpyruvyl-6-hydroxy-3-cyclohexene-1-carboxylate synthase"/>
    <property type="match status" value="1"/>
</dbReference>
<dbReference type="FunFam" id="3.40.50.970:FF:000029">
    <property type="entry name" value="2-succinyl-5-enolpyruvyl-6-hydroxy-3-cyclohexene-1-carboxylate synthase"/>
    <property type="match status" value="1"/>
</dbReference>
<dbReference type="FunFam" id="3.40.50.970:FF:000035">
    <property type="entry name" value="2-succinyl-5-enolpyruvyl-6-hydroxy-3-cyclohexene-1-carboxylate synthase"/>
    <property type="match status" value="1"/>
</dbReference>
<dbReference type="Gene3D" id="3.40.50.970">
    <property type="match status" value="2"/>
</dbReference>
<dbReference type="Gene3D" id="3.40.50.1220">
    <property type="entry name" value="TPP-binding domain"/>
    <property type="match status" value="1"/>
</dbReference>
<dbReference type="HAMAP" id="MF_01659">
    <property type="entry name" value="MenD"/>
    <property type="match status" value="1"/>
</dbReference>
<dbReference type="InterPro" id="IPR004433">
    <property type="entry name" value="MenaQ_synth_MenD"/>
</dbReference>
<dbReference type="InterPro" id="IPR032264">
    <property type="entry name" value="MenD_middle"/>
</dbReference>
<dbReference type="InterPro" id="IPR029061">
    <property type="entry name" value="THDP-binding"/>
</dbReference>
<dbReference type="InterPro" id="IPR012001">
    <property type="entry name" value="Thiamin_PyroP_enz_TPP-bd_dom"/>
</dbReference>
<dbReference type="InterPro" id="IPR011766">
    <property type="entry name" value="TPP_enzyme_TPP-bd"/>
</dbReference>
<dbReference type="NCBIfam" id="TIGR00173">
    <property type="entry name" value="menD"/>
    <property type="match status" value="1"/>
</dbReference>
<dbReference type="PANTHER" id="PTHR42916">
    <property type="entry name" value="2-SUCCINYL-5-ENOLPYRUVYL-6-HYDROXY-3-CYCLOHEXENE-1-CARBOXYLATE SYNTHASE"/>
    <property type="match status" value="1"/>
</dbReference>
<dbReference type="PANTHER" id="PTHR42916:SF1">
    <property type="entry name" value="PROTEIN PHYLLO, CHLOROPLASTIC"/>
    <property type="match status" value="1"/>
</dbReference>
<dbReference type="Pfam" id="PF02775">
    <property type="entry name" value="TPP_enzyme_C"/>
    <property type="match status" value="1"/>
</dbReference>
<dbReference type="Pfam" id="PF16582">
    <property type="entry name" value="TPP_enzyme_M_2"/>
    <property type="match status" value="1"/>
</dbReference>
<dbReference type="Pfam" id="PF02776">
    <property type="entry name" value="TPP_enzyme_N"/>
    <property type="match status" value="1"/>
</dbReference>
<dbReference type="PIRSF" id="PIRSF004983">
    <property type="entry name" value="MenD"/>
    <property type="match status" value="1"/>
</dbReference>
<dbReference type="SUPFAM" id="SSF52518">
    <property type="entry name" value="Thiamin diphosphate-binding fold (THDP-binding)"/>
    <property type="match status" value="2"/>
</dbReference>
<comment type="function">
    <text evidence="1">Catalyzes the thiamine diphosphate-dependent decarboxylation of 2-oxoglutarate and the subsequent addition of the resulting succinic semialdehyde-thiamine pyrophosphate anion to isochorismate to yield 2-succinyl-5-enolpyruvyl-6-hydroxy-3-cyclohexene-1-carboxylate (SEPHCHC).</text>
</comment>
<comment type="catalytic activity">
    <reaction evidence="1">
        <text>isochorismate + 2-oxoglutarate + H(+) = 5-enolpyruvoyl-6-hydroxy-2-succinyl-cyclohex-3-ene-1-carboxylate + CO2</text>
        <dbReference type="Rhea" id="RHEA:25593"/>
        <dbReference type="ChEBI" id="CHEBI:15378"/>
        <dbReference type="ChEBI" id="CHEBI:16526"/>
        <dbReference type="ChEBI" id="CHEBI:16810"/>
        <dbReference type="ChEBI" id="CHEBI:29780"/>
        <dbReference type="ChEBI" id="CHEBI:58818"/>
        <dbReference type="EC" id="2.2.1.9"/>
    </reaction>
</comment>
<comment type="cofactor">
    <cofactor evidence="1">
        <name>Mg(2+)</name>
        <dbReference type="ChEBI" id="CHEBI:18420"/>
    </cofactor>
    <cofactor evidence="1">
        <name>Mn(2+)</name>
        <dbReference type="ChEBI" id="CHEBI:29035"/>
    </cofactor>
</comment>
<comment type="cofactor">
    <cofactor evidence="1">
        <name>thiamine diphosphate</name>
        <dbReference type="ChEBI" id="CHEBI:58937"/>
    </cofactor>
    <text evidence="1">Binds 1 thiamine pyrophosphate per subunit.</text>
</comment>
<comment type="pathway">
    <text evidence="1">Quinol/quinone metabolism; 1,4-dihydroxy-2-naphthoate biosynthesis; 1,4-dihydroxy-2-naphthoate from chorismate: step 2/7.</text>
</comment>
<comment type="pathway">
    <text evidence="1">Quinol/quinone metabolism; menaquinone biosynthesis.</text>
</comment>
<comment type="subunit">
    <text evidence="1">Homodimer.</text>
</comment>
<comment type="similarity">
    <text evidence="1">Belongs to the TPP enzyme family. MenD subfamily.</text>
</comment>
<name>MEND_ECOSE</name>
<accession>B6I7K8</accession>
<organism>
    <name type="scientific">Escherichia coli (strain SE11)</name>
    <dbReference type="NCBI Taxonomy" id="409438"/>
    <lineage>
        <taxon>Bacteria</taxon>
        <taxon>Pseudomonadati</taxon>
        <taxon>Pseudomonadota</taxon>
        <taxon>Gammaproteobacteria</taxon>
        <taxon>Enterobacterales</taxon>
        <taxon>Enterobacteriaceae</taxon>
        <taxon>Escherichia</taxon>
    </lineage>
</organism>
<gene>
    <name evidence="1" type="primary">menD</name>
    <name type="ordered locus">ECSE_2524</name>
</gene>
<proteinExistence type="inferred from homology"/>